<feature type="chain" id="PRO_1000214613" description="Large ribosomal subunit protein uL22">
    <location>
        <begin position="1"/>
        <end position="134"/>
    </location>
</feature>
<organism>
    <name type="scientific">Rhodococcus erythropolis (strain PR4 / NBRC 100887)</name>
    <dbReference type="NCBI Taxonomy" id="234621"/>
    <lineage>
        <taxon>Bacteria</taxon>
        <taxon>Bacillati</taxon>
        <taxon>Actinomycetota</taxon>
        <taxon>Actinomycetes</taxon>
        <taxon>Mycobacteriales</taxon>
        <taxon>Nocardiaceae</taxon>
        <taxon>Rhodococcus</taxon>
        <taxon>Rhodococcus erythropolis group</taxon>
    </lineage>
</organism>
<comment type="function">
    <text evidence="1">This protein binds specifically to 23S rRNA; its binding is stimulated by other ribosomal proteins, e.g. L4, L17, and L20. It is important during the early stages of 50S assembly. It makes multiple contacts with different domains of the 23S rRNA in the assembled 50S subunit and ribosome (By similarity).</text>
</comment>
<comment type="function">
    <text evidence="1">The globular domain of the protein is located near the polypeptide exit tunnel on the outside of the subunit, while an extended beta-hairpin is found that lines the wall of the exit tunnel in the center of the 70S ribosome.</text>
</comment>
<comment type="subunit">
    <text evidence="1">Part of the 50S ribosomal subunit.</text>
</comment>
<comment type="similarity">
    <text evidence="1">Belongs to the universal ribosomal protein uL22 family.</text>
</comment>
<sequence length="134" mass="14459">MSNTETANPTAKAVAKHVRVTPMKARRVVDLVRGRSVEDALNILKFAPQAASEPVAKVIASAAANAENNLDLDPSTLVVATAFVDEGATLKRFQPRAQGRAFRIRKRTSHITVIVESLPKTGTSTRNRRKGSAQ</sequence>
<proteinExistence type="inferred from homology"/>
<protein>
    <recommendedName>
        <fullName evidence="1">Large ribosomal subunit protein uL22</fullName>
    </recommendedName>
    <alternativeName>
        <fullName evidence="2">50S ribosomal protein L22</fullName>
    </alternativeName>
</protein>
<reference key="1">
    <citation type="submission" date="2005-03" db="EMBL/GenBank/DDBJ databases">
        <title>Comparison of the complete genome sequences of Rhodococcus erythropolis PR4 and Rhodococcus opacus B4.</title>
        <authorList>
            <person name="Takarada H."/>
            <person name="Sekine M."/>
            <person name="Hosoyama A."/>
            <person name="Yamada R."/>
            <person name="Fujisawa T."/>
            <person name="Omata S."/>
            <person name="Shimizu A."/>
            <person name="Tsukatani N."/>
            <person name="Tanikawa S."/>
            <person name="Fujita N."/>
            <person name="Harayama S."/>
        </authorList>
    </citation>
    <scope>NUCLEOTIDE SEQUENCE [LARGE SCALE GENOMIC DNA]</scope>
    <source>
        <strain>PR4 / NBRC 100887</strain>
    </source>
</reference>
<name>RL22_RHOE4</name>
<accession>C0ZW30</accession>
<dbReference type="EMBL" id="AP008957">
    <property type="protein sequence ID" value="BAH32565.1"/>
    <property type="molecule type" value="Genomic_DNA"/>
</dbReference>
<dbReference type="RefSeq" id="WP_003940717.1">
    <property type="nucleotide sequence ID" value="NC_012490.1"/>
</dbReference>
<dbReference type="SMR" id="C0ZW30"/>
<dbReference type="GeneID" id="93803299"/>
<dbReference type="KEGG" id="rer:RER_18570"/>
<dbReference type="eggNOG" id="COG0091">
    <property type="taxonomic scope" value="Bacteria"/>
</dbReference>
<dbReference type="HOGENOM" id="CLU_083987_3_2_11"/>
<dbReference type="Proteomes" id="UP000002204">
    <property type="component" value="Chromosome"/>
</dbReference>
<dbReference type="GO" id="GO:0022625">
    <property type="term" value="C:cytosolic large ribosomal subunit"/>
    <property type="evidence" value="ECO:0007669"/>
    <property type="project" value="TreeGrafter"/>
</dbReference>
<dbReference type="GO" id="GO:0019843">
    <property type="term" value="F:rRNA binding"/>
    <property type="evidence" value="ECO:0007669"/>
    <property type="project" value="UniProtKB-UniRule"/>
</dbReference>
<dbReference type="GO" id="GO:0003735">
    <property type="term" value="F:structural constituent of ribosome"/>
    <property type="evidence" value="ECO:0007669"/>
    <property type="project" value="InterPro"/>
</dbReference>
<dbReference type="GO" id="GO:0006412">
    <property type="term" value="P:translation"/>
    <property type="evidence" value="ECO:0007669"/>
    <property type="project" value="UniProtKB-UniRule"/>
</dbReference>
<dbReference type="CDD" id="cd00336">
    <property type="entry name" value="Ribosomal_L22"/>
    <property type="match status" value="1"/>
</dbReference>
<dbReference type="FunFam" id="3.90.470.10:FF:000002">
    <property type="entry name" value="50S ribosomal protein L22"/>
    <property type="match status" value="1"/>
</dbReference>
<dbReference type="Gene3D" id="3.90.470.10">
    <property type="entry name" value="Ribosomal protein L22/L17"/>
    <property type="match status" value="1"/>
</dbReference>
<dbReference type="HAMAP" id="MF_01331_B">
    <property type="entry name" value="Ribosomal_uL22_B"/>
    <property type="match status" value="1"/>
</dbReference>
<dbReference type="InterPro" id="IPR001063">
    <property type="entry name" value="Ribosomal_uL22"/>
</dbReference>
<dbReference type="InterPro" id="IPR005727">
    <property type="entry name" value="Ribosomal_uL22_bac/chlpt-type"/>
</dbReference>
<dbReference type="InterPro" id="IPR047867">
    <property type="entry name" value="Ribosomal_uL22_bac/org-type"/>
</dbReference>
<dbReference type="InterPro" id="IPR018260">
    <property type="entry name" value="Ribosomal_uL22_CS"/>
</dbReference>
<dbReference type="InterPro" id="IPR036394">
    <property type="entry name" value="Ribosomal_uL22_sf"/>
</dbReference>
<dbReference type="NCBIfam" id="TIGR01044">
    <property type="entry name" value="rplV_bact"/>
    <property type="match status" value="1"/>
</dbReference>
<dbReference type="PANTHER" id="PTHR13501">
    <property type="entry name" value="CHLOROPLAST 50S RIBOSOMAL PROTEIN L22-RELATED"/>
    <property type="match status" value="1"/>
</dbReference>
<dbReference type="PANTHER" id="PTHR13501:SF8">
    <property type="entry name" value="LARGE RIBOSOMAL SUBUNIT PROTEIN UL22M"/>
    <property type="match status" value="1"/>
</dbReference>
<dbReference type="Pfam" id="PF00237">
    <property type="entry name" value="Ribosomal_L22"/>
    <property type="match status" value="1"/>
</dbReference>
<dbReference type="SUPFAM" id="SSF54843">
    <property type="entry name" value="Ribosomal protein L22"/>
    <property type="match status" value="1"/>
</dbReference>
<dbReference type="PROSITE" id="PS00464">
    <property type="entry name" value="RIBOSOMAL_L22"/>
    <property type="match status" value="1"/>
</dbReference>
<gene>
    <name evidence="1" type="primary">rplV</name>
    <name type="ordered locus">RER_18570</name>
</gene>
<evidence type="ECO:0000255" key="1">
    <source>
        <dbReference type="HAMAP-Rule" id="MF_01331"/>
    </source>
</evidence>
<evidence type="ECO:0000305" key="2"/>
<keyword id="KW-0687">Ribonucleoprotein</keyword>
<keyword id="KW-0689">Ribosomal protein</keyword>
<keyword id="KW-0694">RNA-binding</keyword>
<keyword id="KW-0699">rRNA-binding</keyword>